<name>YPE3_RHORU</name>
<feature type="chain" id="PRO_0000156112" description="Uncharacterized protein in petC 3'region">
    <location>
        <begin position="1"/>
        <end position="184" status="greater than"/>
    </location>
</feature>
<feature type="non-terminal residue">
    <location>
        <position position="184"/>
    </location>
</feature>
<evidence type="ECO:0000305" key="1"/>
<sequence>MNVKGTPTRTIWPAREGGAVWIIDQTRLPHEFVTQRLNDLGAVAHAIRAMLVRGAPLIGATAAYGVALGMAEDPSDEGLTRACQTLLATRPTAVNLRWAIEAMAESLAAVPPDQRAQAAWAKAGAICDEDVALNEAIGDHGLGIIKDLARTKGVEKGGEGPINILTHCNAGWLATVDWARPWRR</sequence>
<dbReference type="EMBL" id="X55387">
    <property type="protein sequence ID" value="CAA39062.1"/>
    <property type="molecule type" value="Genomic_DNA"/>
</dbReference>
<dbReference type="PIR" id="S12260">
    <property type="entry name" value="S12260"/>
</dbReference>
<dbReference type="SMR" id="P23140"/>
<dbReference type="GO" id="GO:0046523">
    <property type="term" value="F:S-methyl-5-thioribose-1-phosphate isomerase activity"/>
    <property type="evidence" value="ECO:0007669"/>
    <property type="project" value="TreeGrafter"/>
</dbReference>
<dbReference type="GO" id="GO:0019509">
    <property type="term" value="P:L-methionine salvage from methylthioadenosine"/>
    <property type="evidence" value="ECO:0007669"/>
    <property type="project" value="TreeGrafter"/>
</dbReference>
<dbReference type="Gene3D" id="1.20.120.420">
    <property type="entry name" value="translation initiation factor eif-2b, domain 1"/>
    <property type="match status" value="1"/>
</dbReference>
<dbReference type="InterPro" id="IPR000649">
    <property type="entry name" value="IF-2B-related"/>
</dbReference>
<dbReference type="InterPro" id="IPR027363">
    <property type="entry name" value="M1Pi_N"/>
</dbReference>
<dbReference type="InterPro" id="IPR037171">
    <property type="entry name" value="NagB/RpiA_transferase-like"/>
</dbReference>
<dbReference type="PANTHER" id="PTHR43475">
    <property type="entry name" value="METHYLTHIORIBOSE-1-PHOSPHATE ISOMERASE"/>
    <property type="match status" value="1"/>
</dbReference>
<dbReference type="PANTHER" id="PTHR43475:SF1">
    <property type="entry name" value="METHYLTHIORIBOSE-1-PHOSPHATE ISOMERASE"/>
    <property type="match status" value="1"/>
</dbReference>
<dbReference type="Pfam" id="PF01008">
    <property type="entry name" value="IF-2B"/>
    <property type="match status" value="1"/>
</dbReference>
<dbReference type="SUPFAM" id="SSF100950">
    <property type="entry name" value="NagB/RpiA/CoA transferase-like"/>
    <property type="match status" value="1"/>
</dbReference>
<accession>P23140</accession>
<proteinExistence type="inferred from homology"/>
<protein>
    <recommendedName>
        <fullName>Uncharacterized protein in petC 3'region</fullName>
    </recommendedName>
</protein>
<comment type="similarity">
    <text evidence="1">Belongs to the eIF-2B alpha/beta/delta subunits family.</text>
</comment>
<reference key="1">
    <citation type="journal article" date="1990" name="Mol. Gen. Genet.">
        <title>The pet genes of Rhodospirillum rubrum: cloning and sequencing of the genes for the cytochrome bc1-complex.</title>
        <authorList>
            <person name="Majewski C."/>
            <person name="Trebst A."/>
        </authorList>
    </citation>
    <scope>NUCLEOTIDE SEQUENCE [GENOMIC DNA]</scope>
    <source>
        <strain>FR1</strain>
    </source>
</reference>
<organism>
    <name type="scientific">Rhodospirillum rubrum</name>
    <dbReference type="NCBI Taxonomy" id="1085"/>
    <lineage>
        <taxon>Bacteria</taxon>
        <taxon>Pseudomonadati</taxon>
        <taxon>Pseudomonadota</taxon>
        <taxon>Alphaproteobacteria</taxon>
        <taxon>Rhodospirillales</taxon>
        <taxon>Rhodospirillaceae</taxon>
        <taxon>Rhodospirillum</taxon>
    </lineage>
</organism>